<name>MDCB_PSEAE</name>
<reference key="1">
    <citation type="journal article" date="2000" name="Nature">
        <title>Complete genome sequence of Pseudomonas aeruginosa PAO1, an opportunistic pathogen.</title>
        <authorList>
            <person name="Stover C.K."/>
            <person name="Pham X.-Q.T."/>
            <person name="Erwin A.L."/>
            <person name="Mizoguchi S.D."/>
            <person name="Warrener P."/>
            <person name="Hickey M.J."/>
            <person name="Brinkman F.S.L."/>
            <person name="Hufnagle W.O."/>
            <person name="Kowalik D.J."/>
            <person name="Lagrou M."/>
            <person name="Garber R.L."/>
            <person name="Goltry L."/>
            <person name="Tolentino E."/>
            <person name="Westbrock-Wadman S."/>
            <person name="Yuan Y."/>
            <person name="Brody L.L."/>
            <person name="Coulter S.N."/>
            <person name="Folger K.R."/>
            <person name="Kas A."/>
            <person name="Larbig K."/>
            <person name="Lim R.M."/>
            <person name="Smith K.A."/>
            <person name="Spencer D.H."/>
            <person name="Wong G.K.-S."/>
            <person name="Wu Z."/>
            <person name="Paulsen I.T."/>
            <person name="Reizer J."/>
            <person name="Saier M.H. Jr."/>
            <person name="Hancock R.E.W."/>
            <person name="Lory S."/>
            <person name="Olson M.V."/>
        </authorList>
    </citation>
    <scope>NUCLEOTIDE SEQUENCE [LARGE SCALE GENOMIC DNA]</scope>
    <source>
        <strain>ATCC 15692 / DSM 22644 / CIP 104116 / JCM 14847 / LMG 12228 / 1C / PRS 101 / PAO1</strain>
    </source>
</reference>
<sequence>MNAIANLAATPGADLGECLADLAVDALIDEAELSPKPALVDRRGNGAHADLHLGLMQASALSLWPCFKEMADAAQRHGRIDARLRGVLGQLGRDGEAAMLRTTEGVNTHRGAIWALGLLVAAAALEPRRTQAGEVAARAGRIALLDDPAAAIGDSHGERVRRRYGVGGAREEARLCFPRAVRHGLPQLWRSREGGAGEQNARLDALLAIMSVLDDTCVLHRAGRVGLAAMQDGARAVLAAGGSASLAGRRRLCELDRRLLALNASPGGAADLLAACLFLDRLPAVSGGWAGSL</sequence>
<gene>
    <name evidence="1" type="primary">mdcB</name>
    <name type="ordered locus">PA0209</name>
</gene>
<feature type="chain" id="PRO_0000214673" description="Probable 2-(5''-triphosphoribosyl)-3'-dephosphocoenzyme-A synthase">
    <location>
        <begin position="1"/>
        <end position="293"/>
    </location>
</feature>
<proteinExistence type="inferred from homology"/>
<comment type="function">
    <text evidence="1">Involved in the formation of 2-(5''-phosphoribosyl)-3'-dephosphocoenzyme-A, the prosthetic group of the acyl-carrier protein of the malonate decarboxylase.</text>
</comment>
<comment type="catalytic activity">
    <reaction evidence="1">
        <text>3'-dephospho-CoA + ATP = 2'-(5''-triphospho-alpha-D-ribosyl)-3'-dephospho-CoA + adenine</text>
        <dbReference type="Rhea" id="RHEA:15117"/>
        <dbReference type="ChEBI" id="CHEBI:16708"/>
        <dbReference type="ChEBI" id="CHEBI:30616"/>
        <dbReference type="ChEBI" id="CHEBI:57328"/>
        <dbReference type="ChEBI" id="CHEBI:61378"/>
        <dbReference type="EC" id="2.4.2.52"/>
    </reaction>
</comment>
<comment type="similarity">
    <text evidence="1">Belongs to the CitG/MdcB family.</text>
</comment>
<protein>
    <recommendedName>
        <fullName evidence="1">Probable 2-(5''-triphosphoribosyl)-3'-dephosphocoenzyme-A synthase</fullName>
        <shortName evidence="1">2-(5''-triphosphoribosyl)-3'-dephospho-CoA synthase</shortName>
        <ecNumber evidence="1">2.4.2.52</ecNumber>
    </recommendedName>
</protein>
<keyword id="KW-0067">ATP-binding</keyword>
<keyword id="KW-0547">Nucleotide-binding</keyword>
<keyword id="KW-1185">Reference proteome</keyword>
<keyword id="KW-0808">Transferase</keyword>
<accession>Q9I6S9</accession>
<dbReference type="EC" id="2.4.2.52" evidence="1"/>
<dbReference type="EMBL" id="AE004091">
    <property type="protein sequence ID" value="AAG03598.1"/>
    <property type="molecule type" value="Genomic_DNA"/>
</dbReference>
<dbReference type="PIR" id="F83618">
    <property type="entry name" value="F83618"/>
</dbReference>
<dbReference type="RefSeq" id="NP_248900.1">
    <property type="nucleotide sequence ID" value="NC_002516.2"/>
</dbReference>
<dbReference type="RefSeq" id="WP_003112667.1">
    <property type="nucleotide sequence ID" value="NZ_QZGE01000024.1"/>
</dbReference>
<dbReference type="FunCoup" id="Q9I6S9">
    <property type="interactions" value="154"/>
</dbReference>
<dbReference type="STRING" id="208964.PA0209"/>
<dbReference type="PaxDb" id="208964-PA0209"/>
<dbReference type="GeneID" id="879248"/>
<dbReference type="KEGG" id="pae:PA0209"/>
<dbReference type="PATRIC" id="fig|208964.12.peg.217"/>
<dbReference type="PseudoCAP" id="PA0209"/>
<dbReference type="HOGENOM" id="CLU_056179_0_0_6"/>
<dbReference type="InParanoid" id="Q9I6S9"/>
<dbReference type="OrthoDB" id="114886at2"/>
<dbReference type="PhylomeDB" id="Q9I6S9"/>
<dbReference type="BioCyc" id="PAER208964:G1FZ6-211-MONOMER"/>
<dbReference type="Proteomes" id="UP000002438">
    <property type="component" value="Chromosome"/>
</dbReference>
<dbReference type="GO" id="GO:0005524">
    <property type="term" value="F:ATP binding"/>
    <property type="evidence" value="ECO:0007669"/>
    <property type="project" value="UniProtKB-KW"/>
</dbReference>
<dbReference type="GO" id="GO:0046917">
    <property type="term" value="F:triphosphoribosyl-dephospho-CoA synthase activity"/>
    <property type="evidence" value="ECO:0000318"/>
    <property type="project" value="GO_Central"/>
</dbReference>
<dbReference type="GO" id="GO:0051191">
    <property type="term" value="P:prosthetic group biosynthetic process"/>
    <property type="evidence" value="ECO:0000318"/>
    <property type="project" value="GO_Central"/>
</dbReference>
<dbReference type="FunFam" id="1.10.4200.10:FF:000002">
    <property type="entry name" value="Probable 2-(5''-triphosphoribosyl)-3'-dephosphocoenzyme-A synthase"/>
    <property type="match status" value="1"/>
</dbReference>
<dbReference type="FunFam" id="1.10.4200.10:FF:000003">
    <property type="entry name" value="Probable 2-(5''-triphosphoribosyl)-3'-dephosphocoenzyme-A synthase"/>
    <property type="match status" value="1"/>
</dbReference>
<dbReference type="Gene3D" id="1.10.4200.10">
    <property type="entry name" value="Triphosphoribosyl-dephospho-CoA protein"/>
    <property type="match status" value="2"/>
</dbReference>
<dbReference type="HAMAP" id="MF_01883">
    <property type="entry name" value="MdcB"/>
    <property type="match status" value="1"/>
</dbReference>
<dbReference type="InterPro" id="IPR002736">
    <property type="entry name" value="CitG"/>
</dbReference>
<dbReference type="InterPro" id="IPR017555">
    <property type="entry name" value="TriPribosyl-deP-CoA_syn"/>
</dbReference>
<dbReference type="NCBIfam" id="TIGR03132">
    <property type="entry name" value="malonate_mdcB"/>
    <property type="match status" value="1"/>
</dbReference>
<dbReference type="NCBIfam" id="NF002315">
    <property type="entry name" value="PRK01237.1"/>
    <property type="match status" value="1"/>
</dbReference>
<dbReference type="PANTHER" id="PTHR30201:SF2">
    <property type="entry name" value="2-(5''-TRIPHOSPHORIBOSYL)-3'-DEPHOSPHOCOENZYME-A SYNTHASE"/>
    <property type="match status" value="1"/>
</dbReference>
<dbReference type="PANTHER" id="PTHR30201">
    <property type="entry name" value="TRIPHOSPHORIBOSYL-DEPHOSPHO-COA SYNTHASE"/>
    <property type="match status" value="1"/>
</dbReference>
<dbReference type="Pfam" id="PF01874">
    <property type="entry name" value="CitG"/>
    <property type="match status" value="1"/>
</dbReference>
<evidence type="ECO:0000255" key="1">
    <source>
        <dbReference type="HAMAP-Rule" id="MF_01883"/>
    </source>
</evidence>
<organism>
    <name type="scientific">Pseudomonas aeruginosa (strain ATCC 15692 / DSM 22644 / CIP 104116 / JCM 14847 / LMG 12228 / 1C / PRS 101 / PAO1)</name>
    <dbReference type="NCBI Taxonomy" id="208964"/>
    <lineage>
        <taxon>Bacteria</taxon>
        <taxon>Pseudomonadati</taxon>
        <taxon>Pseudomonadota</taxon>
        <taxon>Gammaproteobacteria</taxon>
        <taxon>Pseudomonadales</taxon>
        <taxon>Pseudomonadaceae</taxon>
        <taxon>Pseudomonas</taxon>
    </lineage>
</organism>